<feature type="chain" id="PRO_0000214259" description="Na(+)-translocating NADH-quinone reductase subunit E">
    <location>
        <begin position="1"/>
        <end position="198"/>
    </location>
</feature>
<feature type="transmembrane region" description="Helical" evidence="1">
    <location>
        <begin position="11"/>
        <end position="31"/>
    </location>
</feature>
<feature type="transmembrane region" description="Helical" evidence="1">
    <location>
        <begin position="39"/>
        <end position="59"/>
    </location>
</feature>
<feature type="transmembrane region" description="Helical" evidence="1">
    <location>
        <begin position="77"/>
        <end position="97"/>
    </location>
</feature>
<feature type="transmembrane region" description="Helical" evidence="1">
    <location>
        <begin position="110"/>
        <end position="130"/>
    </location>
</feature>
<feature type="transmembrane region" description="Helical" evidence="1">
    <location>
        <begin position="140"/>
        <end position="160"/>
    </location>
</feature>
<feature type="transmembrane region" description="Helical" evidence="1">
    <location>
        <begin position="176"/>
        <end position="196"/>
    </location>
</feature>
<feature type="helix" evidence="2">
    <location>
        <begin position="3"/>
        <end position="12"/>
    </location>
</feature>
<feature type="helix" evidence="2">
    <location>
        <begin position="17"/>
        <end position="20"/>
    </location>
</feature>
<feature type="helix" evidence="2">
    <location>
        <begin position="25"/>
        <end position="30"/>
    </location>
</feature>
<feature type="helix" evidence="2">
    <location>
        <begin position="35"/>
        <end position="62"/>
    </location>
</feature>
<feature type="turn" evidence="2">
    <location>
        <begin position="66"/>
        <end position="68"/>
    </location>
</feature>
<feature type="helix" evidence="2">
    <location>
        <begin position="76"/>
        <end position="78"/>
    </location>
</feature>
<feature type="helix" evidence="2">
    <location>
        <begin position="79"/>
        <end position="101"/>
    </location>
</feature>
<feature type="helix" evidence="2">
    <location>
        <begin position="103"/>
        <end position="108"/>
    </location>
</feature>
<feature type="turn" evidence="2">
    <location>
        <begin position="109"/>
        <end position="112"/>
    </location>
</feature>
<feature type="helix" evidence="2">
    <location>
        <begin position="113"/>
        <end position="116"/>
    </location>
</feature>
<feature type="helix" evidence="2">
    <location>
        <begin position="120"/>
        <end position="131"/>
    </location>
</feature>
<feature type="helix" evidence="2">
    <location>
        <begin position="136"/>
        <end position="163"/>
    </location>
</feature>
<feature type="helix" evidence="2">
    <location>
        <begin position="164"/>
        <end position="166"/>
    </location>
</feature>
<feature type="turn" evidence="2">
    <location>
        <begin position="171"/>
        <end position="175"/>
    </location>
</feature>
<feature type="helix" evidence="2">
    <location>
        <begin position="176"/>
        <end position="190"/>
    </location>
</feature>
<feature type="helix" evidence="2">
    <location>
        <begin position="191"/>
        <end position="193"/>
    </location>
</feature>
<proteinExistence type="evidence at protein level"/>
<dbReference type="EC" id="7.2.1.1" evidence="1"/>
<dbReference type="EMBL" id="AF117331">
    <property type="protein sequence ID" value="AAD29966.1"/>
    <property type="molecule type" value="Genomic_DNA"/>
</dbReference>
<dbReference type="EMBL" id="AE003852">
    <property type="protein sequence ID" value="AAF95435.1"/>
    <property type="molecule type" value="Genomic_DNA"/>
</dbReference>
<dbReference type="PIR" id="C82094">
    <property type="entry name" value="C82094"/>
</dbReference>
<dbReference type="RefSeq" id="NP_231922.1">
    <property type="nucleotide sequence ID" value="NC_002505.1"/>
</dbReference>
<dbReference type="RefSeq" id="WP_000401432.1">
    <property type="nucleotide sequence ID" value="NZ_LT906614.1"/>
</dbReference>
<dbReference type="PDB" id="8A1U">
    <property type="method" value="EM"/>
    <property type="resolution" value="2.86 A"/>
    <property type="chains" value="E=1-198"/>
</dbReference>
<dbReference type="PDB" id="8ACY">
    <property type="method" value="X-ray"/>
    <property type="resolution" value="3.50 A"/>
    <property type="chains" value="E=1-198"/>
</dbReference>
<dbReference type="PDB" id="8EVU">
    <property type="method" value="EM"/>
    <property type="resolution" value="2.58 A"/>
    <property type="chains" value="E=1-198"/>
</dbReference>
<dbReference type="PDBsum" id="8A1U"/>
<dbReference type="PDBsum" id="8ACY"/>
<dbReference type="PDBsum" id="8EVU"/>
<dbReference type="EMDB" id="EMD-15089"/>
<dbReference type="EMDB" id="EMD-28637"/>
<dbReference type="SMR" id="Q9X4Q7"/>
<dbReference type="DIP" id="DIP-61341N"/>
<dbReference type="IntAct" id="Q9X4Q7">
    <property type="interactions" value="1"/>
</dbReference>
<dbReference type="STRING" id="243277.VC_2291"/>
<dbReference type="DNASU" id="2613213"/>
<dbReference type="EnsemblBacteria" id="AAF95435">
    <property type="protein sequence ID" value="AAF95435"/>
    <property type="gene ID" value="VC_2291"/>
</dbReference>
<dbReference type="GeneID" id="88783116"/>
<dbReference type="KEGG" id="vch:VC_2291"/>
<dbReference type="PATRIC" id="fig|243277.26.peg.2185"/>
<dbReference type="eggNOG" id="COG2209">
    <property type="taxonomic scope" value="Bacteria"/>
</dbReference>
<dbReference type="HOGENOM" id="CLU_095255_0_0_6"/>
<dbReference type="BioCyc" id="MetaCyc:MONOMER-16201"/>
<dbReference type="BRENDA" id="7.2.1.1">
    <property type="organism ID" value="15862"/>
</dbReference>
<dbReference type="Proteomes" id="UP000000584">
    <property type="component" value="Chromosome 1"/>
</dbReference>
<dbReference type="GO" id="GO:0009276">
    <property type="term" value="C:Gram-negative-bacterium-type cell wall"/>
    <property type="evidence" value="ECO:0007669"/>
    <property type="project" value="InterPro"/>
</dbReference>
<dbReference type="GO" id="GO:0005886">
    <property type="term" value="C:plasma membrane"/>
    <property type="evidence" value="ECO:0000318"/>
    <property type="project" value="GO_Central"/>
</dbReference>
<dbReference type="GO" id="GO:0016655">
    <property type="term" value="F:oxidoreductase activity, acting on NAD(P)H, quinone or similar compound as acceptor"/>
    <property type="evidence" value="ECO:0007669"/>
    <property type="project" value="UniProtKB-UniRule"/>
</dbReference>
<dbReference type="GO" id="GO:0022904">
    <property type="term" value="P:respiratory electron transport chain"/>
    <property type="evidence" value="ECO:0007669"/>
    <property type="project" value="InterPro"/>
</dbReference>
<dbReference type="GO" id="GO:0006814">
    <property type="term" value="P:sodium ion transport"/>
    <property type="evidence" value="ECO:0007669"/>
    <property type="project" value="UniProtKB-UniRule"/>
</dbReference>
<dbReference type="HAMAP" id="MF_00429">
    <property type="entry name" value="NqrE"/>
    <property type="match status" value="1"/>
</dbReference>
<dbReference type="InterPro" id="IPR003667">
    <property type="entry name" value="NqrDE/RnfAE"/>
</dbReference>
<dbReference type="InterPro" id="IPR050133">
    <property type="entry name" value="NqrDE/RnfAE_oxidrdctase"/>
</dbReference>
<dbReference type="InterPro" id="IPR010967">
    <property type="entry name" value="NqrE"/>
</dbReference>
<dbReference type="NCBIfam" id="TIGR01940">
    <property type="entry name" value="nqrE"/>
    <property type="match status" value="1"/>
</dbReference>
<dbReference type="PANTHER" id="PTHR30335">
    <property type="entry name" value="INTEGRAL MEMBRANE PROTEIN OF SOXR-REDUCING COMPLEX"/>
    <property type="match status" value="1"/>
</dbReference>
<dbReference type="PANTHER" id="PTHR30335:SF1">
    <property type="entry name" value="NA(+)-TRANSLOCATING NADH-QUINONE REDUCTASE SUBUNIT E"/>
    <property type="match status" value="1"/>
</dbReference>
<dbReference type="Pfam" id="PF02508">
    <property type="entry name" value="Rnf-Nqr"/>
    <property type="match status" value="1"/>
</dbReference>
<dbReference type="PIRSF" id="PIRSF006102">
    <property type="entry name" value="NQR_DE"/>
    <property type="match status" value="1"/>
</dbReference>
<reference key="1">
    <citation type="journal article" date="1999" name="Proc. Natl. Acad. Sci. U.S.A.">
        <title>Effects of changes in membrane sodium flux on virulence gene expression in Vibrio cholerae.</title>
        <authorList>
            <person name="Haese C.C."/>
            <person name="Mekalanos J.J."/>
        </authorList>
    </citation>
    <scope>NUCLEOTIDE SEQUENCE [GENOMIC DNA]</scope>
    <source>
        <strain>ATCC 39315 / El Tor Inaba N16961</strain>
    </source>
</reference>
<reference key="2">
    <citation type="journal article" date="2000" name="Nature">
        <title>DNA sequence of both chromosomes of the cholera pathogen Vibrio cholerae.</title>
        <authorList>
            <person name="Heidelberg J.F."/>
            <person name="Eisen J.A."/>
            <person name="Nelson W.C."/>
            <person name="Clayton R.A."/>
            <person name="Gwinn M.L."/>
            <person name="Dodson R.J."/>
            <person name="Haft D.H."/>
            <person name="Hickey E.K."/>
            <person name="Peterson J.D."/>
            <person name="Umayam L.A."/>
            <person name="Gill S.R."/>
            <person name="Nelson K.E."/>
            <person name="Read T.D."/>
            <person name="Tettelin H."/>
            <person name="Richardson D.L."/>
            <person name="Ermolaeva M.D."/>
            <person name="Vamathevan J.J."/>
            <person name="Bass S."/>
            <person name="Qin H."/>
            <person name="Dragoi I."/>
            <person name="Sellers P."/>
            <person name="McDonald L.A."/>
            <person name="Utterback T.R."/>
            <person name="Fleischmann R.D."/>
            <person name="Nierman W.C."/>
            <person name="White O."/>
            <person name="Salzberg S.L."/>
            <person name="Smith H.O."/>
            <person name="Colwell R.R."/>
            <person name="Mekalanos J.J."/>
            <person name="Venter J.C."/>
            <person name="Fraser C.M."/>
        </authorList>
    </citation>
    <scope>NUCLEOTIDE SEQUENCE [LARGE SCALE GENOMIC DNA]</scope>
    <source>
        <strain>ATCC 39315 / El Tor Inaba N16961</strain>
    </source>
</reference>
<sequence length="198" mass="21470">MEHYISLLVKSIFIENMALSFFLGMCTFLAVSKKVKTSFGLGIAVIVVLTISVPVNNLVYNLVLKPDALVEGVDLSFLNFITFIGVIAALVQILEMILDRFFPPLYNALGIFLPLITVNCAIFGGVSFMVQRDYSFAESVVYGFGSGVGWMLAIVALAGIREKMKYSDVPPGLRGLGITFITAGLMALGFMSFSGVQL</sequence>
<evidence type="ECO:0000255" key="1">
    <source>
        <dbReference type="HAMAP-Rule" id="MF_00429"/>
    </source>
</evidence>
<evidence type="ECO:0007829" key="2">
    <source>
        <dbReference type="PDB" id="8A1U"/>
    </source>
</evidence>
<comment type="function">
    <text evidence="1">NQR complex catalyzes the reduction of ubiquinone-1 to ubiquinol by two successive reactions, coupled with the transport of Na(+) ions from the cytoplasm to the periplasm. NqrA to NqrE are probably involved in the second step, the conversion of ubisemiquinone to ubiquinol.</text>
</comment>
<comment type="catalytic activity">
    <reaction evidence="1">
        <text>a ubiquinone + n Na(+)(in) + NADH + H(+) = a ubiquinol + n Na(+)(out) + NAD(+)</text>
        <dbReference type="Rhea" id="RHEA:47748"/>
        <dbReference type="Rhea" id="RHEA-COMP:9565"/>
        <dbReference type="Rhea" id="RHEA-COMP:9566"/>
        <dbReference type="ChEBI" id="CHEBI:15378"/>
        <dbReference type="ChEBI" id="CHEBI:16389"/>
        <dbReference type="ChEBI" id="CHEBI:17976"/>
        <dbReference type="ChEBI" id="CHEBI:29101"/>
        <dbReference type="ChEBI" id="CHEBI:57540"/>
        <dbReference type="ChEBI" id="CHEBI:57945"/>
        <dbReference type="EC" id="7.2.1.1"/>
    </reaction>
</comment>
<comment type="subunit">
    <text evidence="1">Composed of six subunits; NqrA, NqrB, NqrC, NqrD, NqrE and NqrF.</text>
</comment>
<comment type="subcellular location">
    <subcellularLocation>
        <location evidence="1">Cell inner membrane</location>
        <topology evidence="1">Multi-pass membrane protein</topology>
    </subcellularLocation>
</comment>
<comment type="similarity">
    <text evidence="1">Belongs to the NqrDE/RnfAE family.</text>
</comment>
<organism>
    <name type="scientific">Vibrio cholerae serotype O1 (strain ATCC 39315 / El Tor Inaba N16961)</name>
    <dbReference type="NCBI Taxonomy" id="243277"/>
    <lineage>
        <taxon>Bacteria</taxon>
        <taxon>Pseudomonadati</taxon>
        <taxon>Pseudomonadota</taxon>
        <taxon>Gammaproteobacteria</taxon>
        <taxon>Vibrionales</taxon>
        <taxon>Vibrionaceae</taxon>
        <taxon>Vibrio</taxon>
    </lineage>
</organism>
<name>NQRE_VIBCH</name>
<accession>Q9X4Q7</accession>
<protein>
    <recommendedName>
        <fullName evidence="1">Na(+)-translocating NADH-quinone reductase subunit E</fullName>
        <shortName evidence="1">Na(+)-NQR subunit E</shortName>
        <shortName evidence="1">Na(+)-translocating NQR subunit E</shortName>
        <ecNumber evidence="1">7.2.1.1</ecNumber>
    </recommendedName>
    <alternativeName>
        <fullName evidence="1">NQR complex subunit E</fullName>
    </alternativeName>
    <alternativeName>
        <fullName evidence="1">NQR-1 subunit E</fullName>
    </alternativeName>
</protein>
<keyword id="KW-0002">3D-structure</keyword>
<keyword id="KW-0997">Cell inner membrane</keyword>
<keyword id="KW-1003">Cell membrane</keyword>
<keyword id="KW-0406">Ion transport</keyword>
<keyword id="KW-0472">Membrane</keyword>
<keyword id="KW-0520">NAD</keyword>
<keyword id="KW-1185">Reference proteome</keyword>
<keyword id="KW-0915">Sodium</keyword>
<keyword id="KW-0739">Sodium transport</keyword>
<keyword id="KW-1278">Translocase</keyword>
<keyword id="KW-0812">Transmembrane</keyword>
<keyword id="KW-1133">Transmembrane helix</keyword>
<keyword id="KW-0813">Transport</keyword>
<keyword id="KW-0830">Ubiquinone</keyword>
<gene>
    <name evidence="1" type="primary">nqrE</name>
    <name type="ordered locus">VC_2291</name>
</gene>